<organism>
    <name type="scientific">Mycolicibacterium smegmatis (strain ATCC 700084 / mc(2)155)</name>
    <name type="common">Mycobacterium smegmatis</name>
    <dbReference type="NCBI Taxonomy" id="246196"/>
    <lineage>
        <taxon>Bacteria</taxon>
        <taxon>Bacillati</taxon>
        <taxon>Actinomycetota</taxon>
        <taxon>Actinomycetes</taxon>
        <taxon>Mycobacteriales</taxon>
        <taxon>Mycobacteriaceae</taxon>
        <taxon>Mycolicibacterium</taxon>
    </lineage>
</organism>
<keyword id="KW-0002">3D-structure</keyword>
<keyword id="KW-0963">Cytoplasm</keyword>
<keyword id="KW-0378">Hydrolase</keyword>
<keyword id="KW-1185">Reference proteome</keyword>
<keyword id="KW-0694">RNA-binding</keyword>
<keyword id="KW-0820">tRNA-binding</keyword>
<gene>
    <name evidence="1" type="primary">pth</name>
    <name type="ordered locus">MSMEG_5432</name>
    <name type="ordered locus">MSMEI_5283</name>
</gene>
<proteinExistence type="evidence at protein level"/>
<evidence type="ECO:0000255" key="1">
    <source>
        <dbReference type="HAMAP-Rule" id="MF_00083"/>
    </source>
</evidence>
<evidence type="ECO:0000269" key="2">
    <source>
    </source>
</evidence>
<evidence type="ECO:0000269" key="3">
    <source>
    </source>
</evidence>
<evidence type="ECO:0000303" key="4">
    <source>
    </source>
</evidence>
<evidence type="ECO:0007744" key="5">
    <source>
        <dbReference type="PDB" id="2NAF"/>
    </source>
</evidence>
<evidence type="ECO:0007744" key="6">
    <source>
        <dbReference type="PDB" id="3KJZ"/>
    </source>
</evidence>
<evidence type="ECO:0007829" key="7">
    <source>
        <dbReference type="PDB" id="2LGJ"/>
    </source>
</evidence>
<evidence type="ECO:0007829" key="8">
    <source>
        <dbReference type="PDB" id="2NAF"/>
    </source>
</evidence>
<evidence type="ECO:0007829" key="9">
    <source>
        <dbReference type="PDB" id="3KK0"/>
    </source>
</evidence>
<evidence type="ECO:0007829" key="10">
    <source>
        <dbReference type="PDB" id="3P2J"/>
    </source>
</evidence>
<dbReference type="EC" id="3.1.1.29" evidence="1"/>
<dbReference type="EMBL" id="CP000480">
    <property type="protein sequence ID" value="ABK75581.1"/>
    <property type="molecule type" value="Genomic_DNA"/>
</dbReference>
<dbReference type="EMBL" id="CP001663">
    <property type="protein sequence ID" value="AFP41725.1"/>
    <property type="molecule type" value="Genomic_DNA"/>
</dbReference>
<dbReference type="RefSeq" id="WP_011730530.1">
    <property type="nucleotide sequence ID" value="NZ_SIJM01000006.1"/>
</dbReference>
<dbReference type="RefSeq" id="YP_889671.1">
    <property type="nucleotide sequence ID" value="NC_008596.1"/>
</dbReference>
<dbReference type="PDB" id="2LGJ">
    <property type="method" value="NMR"/>
    <property type="chains" value="A=1-191"/>
</dbReference>
<dbReference type="PDB" id="2NAF">
    <property type="method" value="NMR"/>
    <property type="chains" value="A=1-191"/>
</dbReference>
<dbReference type="PDB" id="3KJZ">
    <property type="method" value="X-ray"/>
    <property type="resolution" value="2.40 A"/>
    <property type="chains" value="A=1-191"/>
</dbReference>
<dbReference type="PDB" id="3KK0">
    <property type="method" value="X-ray"/>
    <property type="resolution" value="2.65 A"/>
    <property type="chains" value="A=1-191"/>
</dbReference>
<dbReference type="PDB" id="3P2J">
    <property type="method" value="X-ray"/>
    <property type="resolution" value="2.22 A"/>
    <property type="chains" value="A=1-191"/>
</dbReference>
<dbReference type="PDBsum" id="2LGJ"/>
<dbReference type="PDBsum" id="2NAF"/>
<dbReference type="PDBsum" id="3KJZ"/>
<dbReference type="PDBsum" id="3KK0"/>
<dbReference type="PDBsum" id="3P2J"/>
<dbReference type="BMRB" id="A0R3D3"/>
<dbReference type="SMR" id="A0R3D3"/>
<dbReference type="STRING" id="246196.MSMEG_5432"/>
<dbReference type="PaxDb" id="246196-MSMEI_5283"/>
<dbReference type="KEGG" id="msb:LJ00_26845"/>
<dbReference type="KEGG" id="msg:MSMEI_5283"/>
<dbReference type="KEGG" id="msm:MSMEG_5432"/>
<dbReference type="PATRIC" id="fig|246196.19.peg.5293"/>
<dbReference type="eggNOG" id="COG0193">
    <property type="taxonomic scope" value="Bacteria"/>
</dbReference>
<dbReference type="OrthoDB" id="9800507at2"/>
<dbReference type="BRENDA" id="3.1.1.29">
    <property type="organism ID" value="3512"/>
</dbReference>
<dbReference type="EvolutionaryTrace" id="A0R3D3"/>
<dbReference type="Proteomes" id="UP000000757">
    <property type="component" value="Chromosome"/>
</dbReference>
<dbReference type="Proteomes" id="UP000006158">
    <property type="component" value="Chromosome"/>
</dbReference>
<dbReference type="GO" id="GO:0005737">
    <property type="term" value="C:cytoplasm"/>
    <property type="evidence" value="ECO:0007669"/>
    <property type="project" value="UniProtKB-SubCell"/>
</dbReference>
<dbReference type="GO" id="GO:0004045">
    <property type="term" value="F:peptidyl-tRNA hydrolase activity"/>
    <property type="evidence" value="ECO:0007669"/>
    <property type="project" value="UniProtKB-UniRule"/>
</dbReference>
<dbReference type="GO" id="GO:0000049">
    <property type="term" value="F:tRNA binding"/>
    <property type="evidence" value="ECO:0007669"/>
    <property type="project" value="UniProtKB-UniRule"/>
</dbReference>
<dbReference type="GO" id="GO:0006515">
    <property type="term" value="P:protein quality control for misfolded or incompletely synthesized proteins"/>
    <property type="evidence" value="ECO:0007669"/>
    <property type="project" value="UniProtKB-UniRule"/>
</dbReference>
<dbReference type="GO" id="GO:0072344">
    <property type="term" value="P:rescue of stalled ribosome"/>
    <property type="evidence" value="ECO:0007669"/>
    <property type="project" value="UniProtKB-UniRule"/>
</dbReference>
<dbReference type="CDD" id="cd00462">
    <property type="entry name" value="PTH"/>
    <property type="match status" value="1"/>
</dbReference>
<dbReference type="FunFam" id="3.40.50.1470:FF:000001">
    <property type="entry name" value="Peptidyl-tRNA hydrolase"/>
    <property type="match status" value="1"/>
</dbReference>
<dbReference type="Gene3D" id="3.40.50.1470">
    <property type="entry name" value="Peptidyl-tRNA hydrolase"/>
    <property type="match status" value="1"/>
</dbReference>
<dbReference type="HAMAP" id="MF_00083">
    <property type="entry name" value="Pept_tRNA_hydro_bact"/>
    <property type="match status" value="1"/>
</dbReference>
<dbReference type="InterPro" id="IPR001328">
    <property type="entry name" value="Pept_tRNA_hydro"/>
</dbReference>
<dbReference type="InterPro" id="IPR018171">
    <property type="entry name" value="Pept_tRNA_hydro_CS"/>
</dbReference>
<dbReference type="InterPro" id="IPR036416">
    <property type="entry name" value="Pept_tRNA_hydro_sf"/>
</dbReference>
<dbReference type="NCBIfam" id="TIGR00447">
    <property type="entry name" value="pth"/>
    <property type="match status" value="1"/>
</dbReference>
<dbReference type="PANTHER" id="PTHR17224">
    <property type="entry name" value="PEPTIDYL-TRNA HYDROLASE"/>
    <property type="match status" value="1"/>
</dbReference>
<dbReference type="PANTHER" id="PTHR17224:SF1">
    <property type="entry name" value="PEPTIDYL-TRNA HYDROLASE"/>
    <property type="match status" value="1"/>
</dbReference>
<dbReference type="Pfam" id="PF01195">
    <property type="entry name" value="Pept_tRNA_hydro"/>
    <property type="match status" value="1"/>
</dbReference>
<dbReference type="SUPFAM" id="SSF53178">
    <property type="entry name" value="Peptidyl-tRNA hydrolase-like"/>
    <property type="match status" value="1"/>
</dbReference>
<dbReference type="PROSITE" id="PS01195">
    <property type="entry name" value="PEPT_TRNA_HYDROL_1"/>
    <property type="match status" value="1"/>
</dbReference>
<dbReference type="PROSITE" id="PS01196">
    <property type="entry name" value="PEPT_TRNA_HYDROL_2"/>
    <property type="match status" value="1"/>
</dbReference>
<comment type="function">
    <text evidence="1">Hydrolyzes ribosome-free peptidyl-tRNAs (with 1 or more amino acids incorporated), which drop off the ribosome during protein synthesis, or as a result of ribosome stalling.</text>
</comment>
<comment type="function">
    <text evidence="1">Catalyzes the release of premature peptidyl moieties from peptidyl-tRNA molecules trapped in stalled 50S ribosomal subunits, and thus maintains levels of free tRNAs and 50S ribosomes.</text>
</comment>
<comment type="catalytic activity">
    <reaction evidence="1">
        <text>an N-acyl-L-alpha-aminoacyl-tRNA + H2O = an N-acyl-L-amino acid + a tRNA + H(+)</text>
        <dbReference type="Rhea" id="RHEA:54448"/>
        <dbReference type="Rhea" id="RHEA-COMP:10123"/>
        <dbReference type="Rhea" id="RHEA-COMP:13883"/>
        <dbReference type="ChEBI" id="CHEBI:15377"/>
        <dbReference type="ChEBI" id="CHEBI:15378"/>
        <dbReference type="ChEBI" id="CHEBI:59874"/>
        <dbReference type="ChEBI" id="CHEBI:78442"/>
        <dbReference type="ChEBI" id="CHEBI:138191"/>
        <dbReference type="EC" id="3.1.1.29"/>
    </reaction>
</comment>
<comment type="subunit">
    <text evidence="1 2 3">Monomer.</text>
</comment>
<comment type="subcellular location">
    <subcellularLocation>
        <location evidence="1">Cytoplasm</location>
    </subcellularLocation>
</comment>
<comment type="similarity">
    <text evidence="1">Belongs to the PTH family.</text>
</comment>
<accession>A0R3D3</accession>
<accession>I7FK76</accession>
<protein>
    <recommendedName>
        <fullName evidence="1 4">Peptidyl-tRNA hydrolase</fullName>
        <shortName evidence="1">Pth</shortName>
        <ecNumber evidence="1">3.1.1.29</ecNumber>
    </recommendedName>
</protein>
<name>PTH_MYCS2</name>
<feature type="chain" id="PRO_1000010613" description="Peptidyl-tRNA hydrolase">
    <location>
        <begin position="1"/>
        <end position="191"/>
    </location>
</feature>
<feature type="active site" description="Proton acceptor" evidence="1">
    <location>
        <position position="22"/>
    </location>
</feature>
<feature type="binding site" evidence="1">
    <location>
        <position position="17"/>
    </location>
    <ligand>
        <name>tRNA</name>
        <dbReference type="ChEBI" id="CHEBI:17843"/>
    </ligand>
</feature>
<feature type="binding site" evidence="1">
    <location>
        <position position="68"/>
    </location>
    <ligand>
        <name>tRNA</name>
        <dbReference type="ChEBI" id="CHEBI:17843"/>
    </ligand>
</feature>
<feature type="binding site" evidence="1">
    <location>
        <position position="70"/>
    </location>
    <ligand>
        <name>tRNA</name>
        <dbReference type="ChEBI" id="CHEBI:17843"/>
    </ligand>
</feature>
<feature type="binding site" evidence="1">
    <location>
        <position position="116"/>
    </location>
    <ligand>
        <name>tRNA</name>
        <dbReference type="ChEBI" id="CHEBI:17843"/>
    </ligand>
</feature>
<feature type="site" description="Discriminates between blocked and unblocked aminoacyl-tRNA" evidence="1">
    <location>
        <position position="12"/>
    </location>
</feature>
<feature type="site" description="Stabilizes the basic form of H active site to accept a proton" evidence="1">
    <location>
        <position position="95"/>
    </location>
</feature>
<feature type="strand" evidence="10">
    <location>
        <begin position="5"/>
        <end position="9"/>
    </location>
</feature>
<feature type="turn" evidence="10">
    <location>
        <begin position="15"/>
        <end position="19"/>
    </location>
</feature>
<feature type="helix" evidence="10">
    <location>
        <begin position="21"/>
        <end position="23"/>
    </location>
</feature>
<feature type="helix" evidence="10">
    <location>
        <begin position="24"/>
        <end position="36"/>
    </location>
</feature>
<feature type="strand" evidence="7">
    <location>
        <begin position="41"/>
        <end position="43"/>
    </location>
</feature>
<feature type="turn" evidence="10">
    <location>
        <begin position="44"/>
        <end position="46"/>
    </location>
</feature>
<feature type="strand" evidence="10">
    <location>
        <begin position="49"/>
        <end position="55"/>
    </location>
</feature>
<feature type="strand" evidence="10">
    <location>
        <begin position="58"/>
        <end position="64"/>
    </location>
</feature>
<feature type="strand" evidence="8">
    <location>
        <begin position="66"/>
        <end position="68"/>
    </location>
</feature>
<feature type="helix" evidence="10">
    <location>
        <begin position="69"/>
        <end position="72"/>
    </location>
</feature>
<feature type="helix" evidence="10">
    <location>
        <begin position="73"/>
        <end position="82"/>
    </location>
</feature>
<feature type="helix" evidence="10">
    <location>
        <begin position="87"/>
        <end position="89"/>
    </location>
</feature>
<feature type="strand" evidence="10">
    <location>
        <begin position="90"/>
        <end position="99"/>
    </location>
</feature>
<feature type="strand" evidence="10">
    <location>
        <begin position="104"/>
        <end position="110"/>
    </location>
</feature>
<feature type="helix" evidence="10">
    <location>
        <begin position="116"/>
        <end position="125"/>
    </location>
</feature>
<feature type="strand" evidence="10">
    <location>
        <begin position="130"/>
        <end position="136"/>
    </location>
</feature>
<feature type="strand" evidence="9">
    <location>
        <begin position="141"/>
        <end position="143"/>
    </location>
</feature>
<feature type="helix" evidence="10">
    <location>
        <begin position="146"/>
        <end position="149"/>
    </location>
</feature>
<feature type="helix" evidence="10">
    <location>
        <begin position="156"/>
        <end position="159"/>
    </location>
</feature>
<feature type="helix" evidence="10">
    <location>
        <begin position="162"/>
        <end position="179"/>
    </location>
</feature>
<feature type="helix" evidence="10">
    <location>
        <begin position="181"/>
        <end position="188"/>
    </location>
</feature>
<sequence length="191" mass="20278">MAEPLLVVGLGNPGPTYAKTRHNLGFMVADVLAGRIGSAFKVHKKSGAEVVTGRLAGTSVVLAKPRCYMNESGRQVGPLAKFYSVPPQQIVVIHDELDIDFGRIRLKLGGGEGGHNGLRSVASALGTKNFHRVRIGVGRPPGRKDPAAFVLENFTAAERAEVPTIVEQAADATELLIAQGLEPAQNTVHAW</sequence>
<reference key="1">
    <citation type="submission" date="2006-10" db="EMBL/GenBank/DDBJ databases">
        <authorList>
            <person name="Fleischmann R.D."/>
            <person name="Dodson R.J."/>
            <person name="Haft D.H."/>
            <person name="Merkel J.S."/>
            <person name="Nelson W.C."/>
            <person name="Fraser C.M."/>
        </authorList>
    </citation>
    <scope>NUCLEOTIDE SEQUENCE [LARGE SCALE GENOMIC DNA]</scope>
    <source>
        <strain>ATCC 700084 / mc(2)155</strain>
    </source>
</reference>
<reference key="2">
    <citation type="journal article" date="2007" name="Genome Biol.">
        <title>Interrupted coding sequences in Mycobacterium smegmatis: authentic mutations or sequencing errors?</title>
        <authorList>
            <person name="Deshayes C."/>
            <person name="Perrodou E."/>
            <person name="Gallien S."/>
            <person name="Euphrasie D."/>
            <person name="Schaeffer C."/>
            <person name="Van-Dorsselaer A."/>
            <person name="Poch O."/>
            <person name="Lecompte O."/>
            <person name="Reyrat J.-M."/>
        </authorList>
    </citation>
    <scope>NUCLEOTIDE SEQUENCE [LARGE SCALE GENOMIC DNA]</scope>
    <source>
        <strain>ATCC 700084 / mc(2)155</strain>
    </source>
</reference>
<reference key="3">
    <citation type="journal article" date="2009" name="Genome Res.">
        <title>Ortho-proteogenomics: multiple proteomes investigation through orthology and a new MS-based protocol.</title>
        <authorList>
            <person name="Gallien S."/>
            <person name="Perrodou E."/>
            <person name="Carapito C."/>
            <person name="Deshayes C."/>
            <person name="Reyrat J.-M."/>
            <person name="Van Dorsselaer A."/>
            <person name="Poch O."/>
            <person name="Schaeffer C."/>
            <person name="Lecompte O."/>
        </authorList>
    </citation>
    <scope>NUCLEOTIDE SEQUENCE [LARGE SCALE GENOMIC DNA]</scope>
    <source>
        <strain>ATCC 700084 / mc(2)155</strain>
    </source>
</reference>
<reference evidence="6" key="4">
    <citation type="journal article" date="2012" name="Int. J. Biochem. Mol. Biol.">
        <title>Crystal structure of peptidyl-tRNA hydrolase from mycobacterium smegmatis reveals novel features related to enzyme dynamics.</title>
        <authorList>
            <person name="Kumar A."/>
            <person name="Singh N."/>
            <person name="Yadav R."/>
            <person name="Kumar R.P."/>
            <person name="Sharma S."/>
            <person name="Arora A."/>
            <person name="Singh T.P."/>
        </authorList>
    </citation>
    <scope>X-RAY CRYSTALLOGRAPHY (2.4 ANGSTROMS)</scope>
    <scope>SUBUNIT</scope>
</reference>
<reference evidence="5" key="5">
    <citation type="journal article" date="2016" name="Biochim. Biophys. Acta">
        <title>Structural characterization of peptidyl-tRNA hydrolase from Mycobacterium smegmatis by NMR spectroscopy.</title>
        <authorList>
            <person name="Kabra A."/>
            <person name="Fatma F."/>
            <person name="Shahid S."/>
            <person name="Pathak P.P."/>
            <person name="Yadav R."/>
            <person name="Pulavarti S.V."/>
            <person name="Tripathi S."/>
            <person name="Jain A."/>
            <person name="Arora A."/>
        </authorList>
    </citation>
    <scope>STRUCTURE BY NMR</scope>
    <scope>SUBUNIT</scope>
</reference>